<gene>
    <name evidence="1" type="primary">pyrF</name>
    <name type="ordered locus">PputGB1_1394</name>
</gene>
<keyword id="KW-0210">Decarboxylase</keyword>
<keyword id="KW-0456">Lyase</keyword>
<keyword id="KW-0665">Pyrimidine biosynthesis</keyword>
<organism>
    <name type="scientific">Pseudomonas putida (strain GB-1)</name>
    <dbReference type="NCBI Taxonomy" id="76869"/>
    <lineage>
        <taxon>Bacteria</taxon>
        <taxon>Pseudomonadati</taxon>
        <taxon>Pseudomonadota</taxon>
        <taxon>Gammaproteobacteria</taxon>
        <taxon>Pseudomonadales</taxon>
        <taxon>Pseudomonadaceae</taxon>
        <taxon>Pseudomonas</taxon>
    </lineage>
</organism>
<comment type="function">
    <text evidence="1">Catalyzes the decarboxylation of orotidine 5'-monophosphate (OMP) to uridine 5'-monophosphate (UMP).</text>
</comment>
<comment type="catalytic activity">
    <reaction evidence="1">
        <text>orotidine 5'-phosphate + H(+) = UMP + CO2</text>
        <dbReference type="Rhea" id="RHEA:11596"/>
        <dbReference type="ChEBI" id="CHEBI:15378"/>
        <dbReference type="ChEBI" id="CHEBI:16526"/>
        <dbReference type="ChEBI" id="CHEBI:57538"/>
        <dbReference type="ChEBI" id="CHEBI:57865"/>
        <dbReference type="EC" id="4.1.1.23"/>
    </reaction>
</comment>
<comment type="pathway">
    <text evidence="1">Pyrimidine metabolism; UMP biosynthesis via de novo pathway; UMP from orotate: step 2/2.</text>
</comment>
<comment type="subunit">
    <text evidence="1">Homodimer.</text>
</comment>
<comment type="similarity">
    <text evidence="1">Belongs to the OMP decarboxylase family. Type 1 subfamily.</text>
</comment>
<feature type="chain" id="PRO_1000085494" description="Orotidine 5'-phosphate decarboxylase">
    <location>
        <begin position="1"/>
        <end position="233"/>
    </location>
</feature>
<feature type="active site" description="Proton donor" evidence="1">
    <location>
        <position position="64"/>
    </location>
</feature>
<feature type="binding site" evidence="1">
    <location>
        <position position="13"/>
    </location>
    <ligand>
        <name>substrate</name>
    </ligand>
</feature>
<feature type="binding site" evidence="1">
    <location>
        <position position="35"/>
    </location>
    <ligand>
        <name>substrate</name>
    </ligand>
</feature>
<feature type="binding site" evidence="1">
    <location>
        <begin position="62"/>
        <end position="71"/>
    </location>
    <ligand>
        <name>substrate</name>
    </ligand>
</feature>
<feature type="binding site" evidence="1">
    <location>
        <position position="122"/>
    </location>
    <ligand>
        <name>substrate</name>
    </ligand>
</feature>
<feature type="binding site" evidence="1">
    <location>
        <position position="182"/>
    </location>
    <ligand>
        <name>substrate</name>
    </ligand>
</feature>
<feature type="binding site" evidence="1">
    <location>
        <position position="191"/>
    </location>
    <ligand>
        <name>substrate</name>
    </ligand>
</feature>
<feature type="binding site" evidence="1">
    <location>
        <position position="211"/>
    </location>
    <ligand>
        <name>substrate</name>
    </ligand>
</feature>
<feature type="binding site" evidence="1">
    <location>
        <position position="212"/>
    </location>
    <ligand>
        <name>substrate</name>
    </ligand>
</feature>
<accession>B0KUJ6</accession>
<proteinExistence type="inferred from homology"/>
<protein>
    <recommendedName>
        <fullName evidence="1">Orotidine 5'-phosphate decarboxylase</fullName>
        <ecNumber evidence="1">4.1.1.23</ecNumber>
    </recommendedName>
    <alternativeName>
        <fullName evidence="1">OMP decarboxylase</fullName>
        <shortName evidence="1">OMPDCase</shortName>
        <shortName evidence="1">OMPdecase</shortName>
    </alternativeName>
</protein>
<dbReference type="EC" id="4.1.1.23" evidence="1"/>
<dbReference type="EMBL" id="CP000926">
    <property type="protein sequence ID" value="ABY97301.1"/>
    <property type="molecule type" value="Genomic_DNA"/>
</dbReference>
<dbReference type="RefSeq" id="WP_012271070.1">
    <property type="nucleotide sequence ID" value="NC_010322.1"/>
</dbReference>
<dbReference type="SMR" id="B0KUJ6"/>
<dbReference type="KEGG" id="ppg:PputGB1_1394"/>
<dbReference type="eggNOG" id="COG0284">
    <property type="taxonomic scope" value="Bacteria"/>
</dbReference>
<dbReference type="HOGENOM" id="CLU_067069_0_0_6"/>
<dbReference type="UniPathway" id="UPA00070">
    <property type="reaction ID" value="UER00120"/>
</dbReference>
<dbReference type="Proteomes" id="UP000002157">
    <property type="component" value="Chromosome"/>
</dbReference>
<dbReference type="GO" id="GO:0005829">
    <property type="term" value="C:cytosol"/>
    <property type="evidence" value="ECO:0007669"/>
    <property type="project" value="TreeGrafter"/>
</dbReference>
<dbReference type="GO" id="GO:0004590">
    <property type="term" value="F:orotidine-5'-phosphate decarboxylase activity"/>
    <property type="evidence" value="ECO:0007669"/>
    <property type="project" value="UniProtKB-UniRule"/>
</dbReference>
<dbReference type="GO" id="GO:0006207">
    <property type="term" value="P:'de novo' pyrimidine nucleobase biosynthetic process"/>
    <property type="evidence" value="ECO:0007669"/>
    <property type="project" value="InterPro"/>
</dbReference>
<dbReference type="GO" id="GO:0044205">
    <property type="term" value="P:'de novo' UMP biosynthetic process"/>
    <property type="evidence" value="ECO:0007669"/>
    <property type="project" value="UniProtKB-UniRule"/>
</dbReference>
<dbReference type="CDD" id="cd04725">
    <property type="entry name" value="OMP_decarboxylase_like"/>
    <property type="match status" value="1"/>
</dbReference>
<dbReference type="FunFam" id="3.20.20.70:FF:000015">
    <property type="entry name" value="Orotidine 5'-phosphate decarboxylase"/>
    <property type="match status" value="1"/>
</dbReference>
<dbReference type="Gene3D" id="3.20.20.70">
    <property type="entry name" value="Aldolase class I"/>
    <property type="match status" value="1"/>
</dbReference>
<dbReference type="HAMAP" id="MF_01200_B">
    <property type="entry name" value="OMPdecase_type1_B"/>
    <property type="match status" value="1"/>
</dbReference>
<dbReference type="InterPro" id="IPR013785">
    <property type="entry name" value="Aldolase_TIM"/>
</dbReference>
<dbReference type="InterPro" id="IPR014732">
    <property type="entry name" value="OMPdecase"/>
</dbReference>
<dbReference type="InterPro" id="IPR018089">
    <property type="entry name" value="OMPdecase_AS"/>
</dbReference>
<dbReference type="InterPro" id="IPR047596">
    <property type="entry name" value="OMPdecase_bac"/>
</dbReference>
<dbReference type="InterPro" id="IPR001754">
    <property type="entry name" value="OMPdeCOase_dom"/>
</dbReference>
<dbReference type="InterPro" id="IPR011060">
    <property type="entry name" value="RibuloseP-bd_barrel"/>
</dbReference>
<dbReference type="NCBIfam" id="NF001273">
    <property type="entry name" value="PRK00230.1"/>
    <property type="match status" value="1"/>
</dbReference>
<dbReference type="NCBIfam" id="TIGR01740">
    <property type="entry name" value="pyrF"/>
    <property type="match status" value="1"/>
</dbReference>
<dbReference type="PANTHER" id="PTHR32119">
    <property type="entry name" value="OROTIDINE 5'-PHOSPHATE DECARBOXYLASE"/>
    <property type="match status" value="1"/>
</dbReference>
<dbReference type="PANTHER" id="PTHR32119:SF2">
    <property type="entry name" value="OROTIDINE 5'-PHOSPHATE DECARBOXYLASE"/>
    <property type="match status" value="1"/>
</dbReference>
<dbReference type="Pfam" id="PF00215">
    <property type="entry name" value="OMPdecase"/>
    <property type="match status" value="1"/>
</dbReference>
<dbReference type="SMART" id="SM00934">
    <property type="entry name" value="OMPdecase"/>
    <property type="match status" value="1"/>
</dbReference>
<dbReference type="SUPFAM" id="SSF51366">
    <property type="entry name" value="Ribulose-phoshate binding barrel"/>
    <property type="match status" value="1"/>
</dbReference>
<dbReference type="PROSITE" id="PS00156">
    <property type="entry name" value="OMPDECASE"/>
    <property type="match status" value="1"/>
</dbReference>
<sequence length="233" mass="24551">MSACQTPLIVALDFPTREAALKLADQLDPALCRVKVGKELFTSSASGIVETLCDKGFEVFLDLKFHDIPNTTAMAVKAAAEMGVWMVNVHCSGGLRMMAACREELAKRSGPQPLLIGVTVLTSMEREDLAGIGLDVDPQEQVLRLAALAQKAGMDGLVCSALEAPALKAAHPSLQLVTPGIRPAGSAQDDQRRILTPRQALDAGSDYLVIGRPISQAADPAQALAAVVAEIRG</sequence>
<evidence type="ECO:0000255" key="1">
    <source>
        <dbReference type="HAMAP-Rule" id="MF_01200"/>
    </source>
</evidence>
<name>PYRF_PSEPG</name>
<reference key="1">
    <citation type="submission" date="2008-01" db="EMBL/GenBank/DDBJ databases">
        <title>Complete sequence of Pseudomonas putida GB-1.</title>
        <authorList>
            <consortium name="US DOE Joint Genome Institute"/>
            <person name="Copeland A."/>
            <person name="Lucas S."/>
            <person name="Lapidus A."/>
            <person name="Barry K."/>
            <person name="Glavina del Rio T."/>
            <person name="Dalin E."/>
            <person name="Tice H."/>
            <person name="Pitluck S."/>
            <person name="Bruce D."/>
            <person name="Goodwin L."/>
            <person name="Chertkov O."/>
            <person name="Brettin T."/>
            <person name="Detter J.C."/>
            <person name="Han C."/>
            <person name="Kuske C.R."/>
            <person name="Schmutz J."/>
            <person name="Larimer F."/>
            <person name="Land M."/>
            <person name="Hauser L."/>
            <person name="Kyrpides N."/>
            <person name="Kim E."/>
            <person name="McCarthy J.K."/>
            <person name="Richardson P."/>
        </authorList>
    </citation>
    <scope>NUCLEOTIDE SEQUENCE [LARGE SCALE GENOMIC DNA]</scope>
    <source>
        <strain>GB-1</strain>
    </source>
</reference>